<protein>
    <recommendedName>
        <fullName>Keratin-associated protein 4-11</fullName>
    </recommendedName>
    <alternativeName>
        <fullName>Keratin-associated protein 4-14</fullName>
    </alternativeName>
    <alternativeName>
        <fullName>Keratin-associated protein 4.11</fullName>
    </alternativeName>
    <alternativeName>
        <fullName>Keratin-associated protein 4.14</fullName>
    </alternativeName>
    <alternativeName>
        <fullName>Ultrahigh sulfur keratin-associated protein 4.14</fullName>
    </alternativeName>
</protein>
<comment type="function">
    <text>In the hair cortex, hair keratin intermediate filaments are embedded in an interfilamentous matrix, consisting of hair keratin-associated proteins (KRTAP), which are essential for the formation of a rigid and resistant hair shaft through their extensive disulfide bond cross-linking with abundant cysteine residues of hair keratins. The matrix proteins include the high-sulfur and high-glycine-tyrosine keratins.</text>
</comment>
<comment type="subunit">
    <text>Interacts with hair keratins.</text>
</comment>
<comment type="interaction">
    <interactant intactId="EBI-10302392">
        <id>Q9BYQ6</id>
    </interactant>
    <interactant intactId="EBI-10173507">
        <id>Q6UY14-3</id>
        <label>ADAMTSL4</label>
    </interactant>
    <organismsDiffer>false</organismsDiffer>
    <experiments>6</experiments>
</comment>
<comment type="interaction">
    <interactant intactId="EBI-10302392">
        <id>Q9BYQ6</id>
    </interactant>
    <interactant intactId="EBI-744545">
        <id>Q8NEC5</id>
        <label>CATSPER1</label>
    </interactant>
    <organismsDiffer>false</organismsDiffer>
    <experiments>6</experiments>
</comment>
<comment type="interaction">
    <interactant intactId="EBI-10302392">
        <id>Q9BYQ6</id>
    </interactant>
    <interactant intactId="EBI-713677">
        <id>Q9UGL9</id>
        <label>CRCT1</label>
    </interactant>
    <organismsDiffer>false</organismsDiffer>
    <experiments>6</experiments>
</comment>
<comment type="interaction">
    <interactant intactId="EBI-10302392">
        <id>Q9BYQ6</id>
    </interactant>
    <interactant intactId="EBI-3867333">
        <id>A8MQ03</id>
        <label>CYSRT1</label>
    </interactant>
    <organismsDiffer>false</organismsDiffer>
    <experiments>3</experiments>
</comment>
<comment type="interaction">
    <interactant intactId="EBI-10302392">
        <id>Q9BYQ6</id>
    </interactant>
    <interactant intactId="EBI-746300">
        <id>Q96LJ7</id>
        <label>DHRS1</label>
    </interactant>
    <organismsDiffer>false</organismsDiffer>
    <experiments>3</experiments>
</comment>
<comment type="interaction">
    <interactant intactId="EBI-10302392">
        <id>Q9BYQ6</id>
    </interactant>
    <interactant intactId="EBI-2339219">
        <id>Q08426</id>
        <label>EHHADH</label>
    </interactant>
    <organismsDiffer>false</organismsDiffer>
    <experiments>3</experiments>
</comment>
<comment type="interaction">
    <interactant intactId="EBI-10302392">
        <id>Q9BYQ6</id>
    </interactant>
    <interactant intactId="EBI-744099">
        <id>Q9H0I2</id>
        <label>ENKD1</label>
    </interactant>
    <organismsDiffer>false</organismsDiffer>
    <experiments>3</experiments>
</comment>
<comment type="interaction">
    <interactant intactId="EBI-10302392">
        <id>Q9BYQ6</id>
    </interactant>
    <interactant intactId="EBI-946972">
        <id>Q9UM22</id>
        <label>EPDR1</label>
    </interactant>
    <organismsDiffer>false</organismsDiffer>
    <experiments>3</experiments>
</comment>
<comment type="interaction">
    <interactant intactId="EBI-10302392">
        <id>Q9BYQ6</id>
    </interactant>
    <interactant intactId="EBI-11960181">
        <id>A4D161</id>
        <label>FAM221A</label>
    </interactant>
    <organismsDiffer>false</organismsDiffer>
    <experiments>3</experiments>
</comment>
<comment type="interaction">
    <interactant intactId="EBI-10302392">
        <id>Q9BYQ6</id>
    </interactant>
    <interactant intactId="EBI-11956087">
        <id>Q5HYJ3-3</id>
        <label>FAM76B</label>
    </interactant>
    <organismsDiffer>false</organismsDiffer>
    <experiments>3</experiments>
</comment>
<comment type="interaction">
    <interactant intactId="EBI-10302392">
        <id>Q9BYQ6</id>
    </interactant>
    <interactant intactId="EBI-719816">
        <id>Q9NWN3</id>
        <label>FBXO34</label>
    </interactant>
    <organismsDiffer>false</organismsDiffer>
    <experiments>3</experiments>
</comment>
<comment type="interaction">
    <interactant intactId="EBI-10302392">
        <id>Q9BYQ6</id>
    </interactant>
    <interactant intactId="EBI-9090198">
        <id>P15976-2</id>
        <label>GATA1</label>
    </interactant>
    <organismsDiffer>false</organismsDiffer>
    <experiments>3</experiments>
</comment>
<comment type="interaction">
    <interactant intactId="EBI-10302392">
        <id>Q9BYQ6</id>
    </interactant>
    <interactant intactId="EBI-374781">
        <id>O76003</id>
        <label>GLRX3</label>
    </interactant>
    <organismsDiffer>false</organismsDiffer>
    <experiments>8</experiments>
</comment>
<comment type="interaction">
    <interactant intactId="EBI-10302392">
        <id>Q9BYQ6</id>
    </interactant>
    <interactant intactId="EBI-11975289">
        <id>Q9Y223-2</id>
        <label>GNE</label>
    </interactant>
    <organismsDiffer>false</organismsDiffer>
    <experiments>3</experiments>
</comment>
<comment type="interaction">
    <interactant intactId="EBI-10302392">
        <id>Q9BYQ6</id>
    </interactant>
    <interactant intactId="EBI-740785">
        <id>P49639</id>
        <label>HOXA1</label>
    </interactant>
    <organismsDiffer>false</organismsDiffer>
    <experiments>11</experiments>
</comment>
<comment type="interaction">
    <interactant intactId="EBI-10302392">
        <id>Q9BYQ6</id>
    </interactant>
    <interactant intactId="EBI-6426443">
        <id>Q2WGJ6</id>
        <label>KLHL38</label>
    </interactant>
    <organismsDiffer>false</organismsDiffer>
    <experiments>3</experiments>
</comment>
<comment type="interaction">
    <interactant intactId="EBI-10302392">
        <id>Q9BYQ6</id>
    </interactant>
    <interactant intactId="EBI-11749135">
        <id>Q8IUG1</id>
        <label>KRTAP1-3</label>
    </interactant>
    <organismsDiffer>false</organismsDiffer>
    <experiments>3</experiments>
</comment>
<comment type="interaction">
    <interactant intactId="EBI-10302392">
        <id>Q9BYQ6</id>
    </interactant>
    <interactant intactId="EBI-11741292">
        <id>Q9BYS1</id>
        <label>KRTAP1-5</label>
    </interactant>
    <organismsDiffer>false</organismsDiffer>
    <experiments>3</experiments>
</comment>
<comment type="interaction">
    <interactant intactId="EBI-10302392">
        <id>Q9BYQ6</id>
    </interactant>
    <interactant intactId="EBI-10171774">
        <id>P60410</id>
        <label>KRTAP10-8</label>
    </interactant>
    <organismsDiffer>false</organismsDiffer>
    <experiments>9</experiments>
</comment>
<comment type="interaction">
    <interactant intactId="EBI-10302392">
        <id>Q9BYQ6</id>
    </interactant>
    <interactant intactId="EBI-10172052">
        <id>P60411</id>
        <label>KRTAP10-9</label>
    </interactant>
    <organismsDiffer>false</organismsDiffer>
    <experiments>6</experiments>
</comment>
<comment type="interaction">
    <interactant intactId="EBI-10302392">
        <id>Q9BYQ6</id>
    </interactant>
    <interactant intactId="EBI-1052037">
        <id>Q8IUC1</id>
        <label>KRTAP11-1</label>
    </interactant>
    <organismsDiffer>false</organismsDiffer>
    <experiments>3</experiments>
</comment>
<comment type="interaction">
    <interactant intactId="EBI-10302392">
        <id>Q9BYQ6</id>
    </interactant>
    <interactant intactId="EBI-11992140">
        <id>Q3LI76</id>
        <label>KRTAP15-1</label>
    </interactant>
    <organismsDiffer>false</organismsDiffer>
    <experiments>3</experiments>
</comment>
<comment type="interaction">
    <interactant intactId="EBI-10302392">
        <id>Q9BYQ6</id>
    </interactant>
    <interactant intactId="EBI-11988175">
        <id>Q9BYP8</id>
        <label>KRTAP17-1</label>
    </interactant>
    <organismsDiffer>false</organismsDiffer>
    <experiments>5</experiments>
</comment>
<comment type="interaction">
    <interactant intactId="EBI-10302392">
        <id>Q9BYQ6</id>
    </interactant>
    <interactant intactId="EBI-14065470">
        <id>Q9BYR9</id>
        <label>KRTAP2-4</label>
    </interactant>
    <organismsDiffer>false</organismsDiffer>
    <experiments>3</experiments>
</comment>
<comment type="interaction">
    <interactant intactId="EBI-10302392">
        <id>Q9BYQ6</id>
    </interactant>
    <interactant intactId="EBI-9996449">
        <id>Q9BYR8</id>
        <label>KRTAP3-1</label>
    </interactant>
    <organismsDiffer>false</organismsDiffer>
    <experiments>3</experiments>
</comment>
<comment type="interaction">
    <interactant intactId="EBI-10302392">
        <id>Q9BYQ6</id>
    </interactant>
    <interactant intactId="EBI-3957694">
        <id>Q9BYR6</id>
        <label>KRTAP3-3</label>
    </interactant>
    <organismsDiffer>false</organismsDiffer>
    <experiments>3</experiments>
</comment>
<comment type="interaction">
    <interactant intactId="EBI-10302392">
        <id>Q9BYQ6</id>
    </interactant>
    <interactant intactId="EBI-10250562">
        <id>Q6L8G9</id>
        <label>KRTAP5-6</label>
    </interactant>
    <organismsDiffer>false</organismsDiffer>
    <experiments>3</experiments>
</comment>
<comment type="interaction">
    <interactant intactId="EBI-10302392">
        <id>Q9BYQ6</id>
    </interactant>
    <interactant intactId="EBI-3958099">
        <id>P26371</id>
        <label>KRTAP5-9</label>
    </interactant>
    <organismsDiffer>false</organismsDiffer>
    <experiments>6</experiments>
</comment>
<comment type="interaction">
    <interactant intactId="EBI-10302392">
        <id>Q9BYQ6</id>
    </interactant>
    <interactant intactId="EBI-11962084">
        <id>Q3LI66</id>
        <label>KRTAP6-2</label>
    </interactant>
    <organismsDiffer>false</organismsDiffer>
    <experiments>3</experiments>
</comment>
<comment type="interaction">
    <interactant intactId="EBI-10302392">
        <id>Q9BYQ6</id>
    </interactant>
    <interactant intactId="EBI-1044640">
        <id>Q9BYQ4</id>
        <label>KRTAP9-2</label>
    </interactant>
    <organismsDiffer>false</organismsDiffer>
    <experiments>6</experiments>
</comment>
<comment type="interaction">
    <interactant intactId="EBI-10302392">
        <id>Q9BYQ6</id>
    </interactant>
    <interactant intactId="EBI-11958364">
        <id>Q9BYQ0</id>
        <label>KRTAP9-8</label>
    </interactant>
    <organismsDiffer>false</organismsDiffer>
    <experiments>3</experiments>
</comment>
<comment type="interaction">
    <interactant intactId="EBI-10302392">
        <id>Q9BYQ6</id>
    </interactant>
    <interactant intactId="EBI-11962058">
        <id>Q5T7P2</id>
        <label>LCE1A</label>
    </interactant>
    <organismsDiffer>false</organismsDiffer>
    <experiments>3</experiments>
</comment>
<comment type="interaction">
    <interactant intactId="EBI-10302392">
        <id>Q9BYQ6</id>
    </interactant>
    <interactant intactId="EBI-10245913">
        <id>Q5T7P3</id>
        <label>LCE1B</label>
    </interactant>
    <organismsDiffer>false</organismsDiffer>
    <experiments>6</experiments>
</comment>
<comment type="interaction">
    <interactant intactId="EBI-10302392">
        <id>Q9BYQ6</id>
    </interactant>
    <interactant intactId="EBI-12224199">
        <id>Q5T751</id>
        <label>LCE1C</label>
    </interactant>
    <organismsDiffer>false</organismsDiffer>
    <experiments>5</experiments>
</comment>
<comment type="interaction">
    <interactant intactId="EBI-10302392">
        <id>Q9BYQ6</id>
    </interactant>
    <interactant intactId="EBI-11741311">
        <id>Q5T752</id>
        <label>LCE1D</label>
    </interactant>
    <organismsDiffer>false</organismsDiffer>
    <experiments>5</experiments>
</comment>
<comment type="interaction">
    <interactant intactId="EBI-10302392">
        <id>Q9BYQ6</id>
    </interactant>
    <interactant intactId="EBI-11955335">
        <id>Q5T753</id>
        <label>LCE1E</label>
    </interactant>
    <organismsDiffer>false</organismsDiffer>
    <experiments>3</experiments>
</comment>
<comment type="interaction">
    <interactant intactId="EBI-10302392">
        <id>Q9BYQ6</id>
    </interactant>
    <interactant intactId="EBI-11958008">
        <id>Q5T754</id>
        <label>LCE1F</label>
    </interactant>
    <organismsDiffer>false</organismsDiffer>
    <experiments>3</experiments>
</comment>
<comment type="interaction">
    <interactant intactId="EBI-10302392">
        <id>Q9BYQ6</id>
    </interactant>
    <interactant intactId="EBI-11973993">
        <id>Q5TA81</id>
        <label>LCE2C</label>
    </interactant>
    <organismsDiffer>false</organismsDiffer>
    <experiments>8</experiments>
</comment>
<comment type="interaction">
    <interactant intactId="EBI-10302392">
        <id>Q9BYQ6</id>
    </interactant>
    <interactant intactId="EBI-9394625">
        <id>Q5TA76</id>
        <label>LCE3A</label>
    </interactant>
    <organismsDiffer>false</organismsDiffer>
    <experiments>5</experiments>
</comment>
<comment type="interaction">
    <interactant intactId="EBI-10302392">
        <id>Q9BYQ6</id>
    </interactant>
    <interactant intactId="EBI-11974495">
        <id>Q5TA77</id>
        <label>LCE3B</label>
    </interactant>
    <organismsDiffer>false</organismsDiffer>
    <experiments>3</experiments>
</comment>
<comment type="interaction">
    <interactant intactId="EBI-10302392">
        <id>Q9BYQ6</id>
    </interactant>
    <interactant intactId="EBI-10245291">
        <id>Q5T5A8</id>
        <label>LCE3C</label>
    </interactant>
    <organismsDiffer>false</organismsDiffer>
    <experiments>3</experiments>
</comment>
<comment type="interaction">
    <interactant intactId="EBI-10302392">
        <id>Q9BYQ6</id>
    </interactant>
    <interactant intactId="EBI-10245456">
        <id>Q5T5B0</id>
        <label>LCE3E</label>
    </interactant>
    <organismsDiffer>false</organismsDiffer>
    <experiments>3</experiments>
</comment>
<comment type="interaction">
    <interactant intactId="EBI-10302392">
        <id>Q9BYQ6</id>
    </interactant>
    <interactant intactId="EBI-10246358">
        <id>Q5TA78</id>
        <label>LCE4A</label>
    </interactant>
    <organismsDiffer>false</organismsDiffer>
    <experiments>3</experiments>
</comment>
<comment type="interaction">
    <interactant intactId="EBI-10302392">
        <id>Q9BYQ6</id>
    </interactant>
    <interactant intactId="EBI-11955689">
        <id>Q5TCM9</id>
        <label>LCE5A</label>
    </interactant>
    <organismsDiffer>false</organismsDiffer>
    <experiments>6</experiments>
</comment>
<comment type="interaction">
    <interactant intactId="EBI-10302392">
        <id>Q9BYQ6</id>
    </interactant>
    <interactant intactId="EBI-18115868">
        <id>Q5T871</id>
        <label>LELP1</label>
    </interactant>
    <organismsDiffer>false</organismsDiffer>
    <experiments>3</experiments>
</comment>
<comment type="interaction">
    <interactant intactId="EBI-10302392">
        <id>Q9BYQ6</id>
    </interactant>
    <interactant intactId="EBI-748397">
        <id>P50222</id>
        <label>MEOX2</label>
    </interactant>
    <organismsDiffer>false</organismsDiffer>
    <experiments>3</experiments>
</comment>
<comment type="interaction">
    <interactant intactId="EBI-10302392">
        <id>Q9BYQ6</id>
    </interactant>
    <interactant intactId="EBI-16439278">
        <id>Q6FHY5</id>
        <label>MEOX2</label>
    </interactant>
    <organismsDiffer>false</organismsDiffer>
    <experiments>3</experiments>
</comment>
<comment type="interaction">
    <interactant intactId="EBI-10302392">
        <id>Q9BYQ6</id>
    </interactant>
    <interactant intactId="EBI-945833">
        <id>Q7Z3S9</id>
        <label>NOTCH2NLA</label>
    </interactant>
    <organismsDiffer>false</organismsDiffer>
    <experiments>3</experiments>
</comment>
<comment type="interaction">
    <interactant intactId="EBI-10302392">
        <id>Q9BYQ6</id>
    </interactant>
    <interactant intactId="EBI-22310682">
        <id>P0DPK4</id>
        <label>NOTCH2NLC</label>
    </interactant>
    <organismsDiffer>false</organismsDiffer>
    <experiments>3</experiments>
</comment>
<comment type="interaction">
    <interactant intactId="EBI-10302392">
        <id>Q9BYQ6</id>
    </interactant>
    <interactant intactId="EBI-13644623">
        <id>Q92570</id>
        <label>NR4A3</label>
    </interactant>
    <organismsDiffer>false</organismsDiffer>
    <experiments>3</experiments>
</comment>
<comment type="interaction">
    <interactant intactId="EBI-10302392">
        <id>Q9BYQ6</id>
    </interactant>
    <interactant intactId="EBI-1210753">
        <id>Q7Z417</id>
        <label>NUFIP2</label>
    </interactant>
    <organismsDiffer>false</organismsDiffer>
    <experiments>6</experiments>
</comment>
<comment type="interaction">
    <interactant intactId="EBI-10302392">
        <id>Q9BYQ6</id>
    </interactant>
    <interactant intactId="EBI-740446">
        <id>P32242</id>
        <label>OTX1</label>
    </interactant>
    <organismsDiffer>false</organismsDiffer>
    <experiments>6</experiments>
</comment>
<comment type="interaction">
    <interactant intactId="EBI-10302392">
        <id>Q9BYQ6</id>
    </interactant>
    <interactant intactId="EBI-395883">
        <id>P07237</id>
        <label>P4HB</label>
    </interactant>
    <organismsDiffer>false</organismsDiffer>
    <experiments>3</experiments>
</comment>
<comment type="interaction">
    <interactant intactId="EBI-10302392">
        <id>Q9BYQ6</id>
    </interactant>
    <interactant intactId="EBI-1054653">
        <id>P13667</id>
        <label>PDIA4</label>
    </interactant>
    <organismsDiffer>false</organismsDiffer>
    <experiments>3</experiments>
</comment>
<comment type="interaction">
    <interactant intactId="EBI-10302392">
        <id>Q9BYQ6</id>
    </interactant>
    <interactant intactId="EBI-740019">
        <id>O15162</id>
        <label>PLSCR1</label>
    </interactant>
    <organismsDiffer>false</organismsDiffer>
    <experiments>3</experiments>
</comment>
<comment type="interaction">
    <interactant intactId="EBI-10302392">
        <id>Q9BYQ6</id>
    </interactant>
    <interactant intactId="EBI-18165900">
        <id>A0JP26</id>
        <label>POTEB3</label>
    </interactant>
    <organismsDiffer>false</organismsDiffer>
    <experiments>3</experiments>
</comment>
<comment type="interaction">
    <interactant intactId="EBI-10302392">
        <id>Q9BYQ6</id>
    </interactant>
    <interactant intactId="EBI-17236143">
        <id>Q12837</id>
        <label>POU4F2</label>
    </interactant>
    <organismsDiffer>false</organismsDiffer>
    <experiments>3</experiments>
</comment>
<comment type="interaction">
    <interactant intactId="EBI-10302392">
        <id>Q9BYQ6</id>
    </interactant>
    <interactant intactId="EBI-1567797">
        <id>Q8WWY3</id>
        <label>PRPF31</label>
    </interactant>
    <organismsDiffer>false</organismsDiffer>
    <experiments>3</experiments>
</comment>
<comment type="interaction">
    <interactant intactId="EBI-10302392">
        <id>Q9BYQ6</id>
    </interactant>
    <interactant intactId="EBI-3918154">
        <id>Q9UGC6</id>
        <label>RGS17</label>
    </interactant>
    <organismsDiffer>false</organismsDiffer>
    <experiments>3</experiments>
</comment>
<comment type="interaction">
    <interactant intactId="EBI-10302392">
        <id>Q9BYQ6</id>
    </interactant>
    <interactant intactId="EBI-11955083">
        <id>Q9NUL5-4</id>
        <label>SHFL</label>
    </interactant>
    <organismsDiffer>false</organismsDiffer>
    <experiments>5</experiments>
</comment>
<comment type="interaction">
    <interactant intactId="EBI-10302392">
        <id>Q9BYQ6</id>
    </interactant>
    <interactant intactId="EBI-11998660">
        <id>Q9UHI7-3</id>
        <label>SLC23A1</label>
    </interactant>
    <organismsDiffer>false</organismsDiffer>
    <experiments>3</experiments>
</comment>
<comment type="interaction">
    <interactant intactId="EBI-10302392">
        <id>Q9BYQ6</id>
    </interactant>
    <interactant intactId="EBI-750494">
        <id>P49901</id>
        <label>SMCP</label>
    </interactant>
    <organismsDiffer>false</organismsDiffer>
    <experiments>6</experiments>
</comment>
<comment type="interaction">
    <interactant intactId="EBI-10302392">
        <id>Q9BYQ6</id>
    </interactant>
    <interactant intactId="EBI-742487">
        <id>O43597</id>
        <label>SPRY2</label>
    </interactant>
    <organismsDiffer>false</organismsDiffer>
    <experiments>3</experiments>
</comment>
<comment type="interaction">
    <interactant intactId="EBI-10302392">
        <id>Q9BYQ6</id>
    </interactant>
    <interactant intactId="EBI-779636">
        <id>P01137</id>
        <label>TGFB1</label>
    </interactant>
    <organismsDiffer>false</organismsDiffer>
    <experiments>3</experiments>
</comment>
<comment type="interaction">
    <interactant intactId="EBI-10302392">
        <id>Q9BYQ6</id>
    </interactant>
    <interactant intactId="EBI-8652667">
        <id>O14817</id>
        <label>TSPAN4</label>
    </interactant>
    <organismsDiffer>false</organismsDiffer>
    <experiments>3</experiments>
</comment>
<comment type="interaction">
    <interactant intactId="EBI-10302392">
        <id>Q9BYQ6</id>
    </interactant>
    <interactant intactId="EBI-10249550">
        <id>Q6EMK4</id>
        <label>VASN</label>
    </interactant>
    <organismsDiffer>false</organismsDiffer>
    <experiments>6</experiments>
</comment>
<comment type="interaction">
    <interactant intactId="EBI-10302392">
        <id>Q9BYQ6</id>
    </interactant>
    <interactant intactId="EBI-11957216">
        <id>A8MV65-2</id>
        <label>VGLL3</label>
    </interactant>
    <organismsDiffer>false</organismsDiffer>
    <experiments>3</experiments>
</comment>
<comment type="interaction">
    <interactant intactId="EBI-10302392">
        <id>Q9BYQ6</id>
    </interactant>
    <interactant intactId="EBI-740727">
        <id>Q8TAU3</id>
        <label>ZNF417</label>
    </interactant>
    <organismsDiffer>false</organismsDiffer>
    <experiments>3</experiments>
</comment>
<comment type="interaction">
    <interactant intactId="EBI-10302392">
        <id>Q9BYQ6</id>
    </interactant>
    <interactant intactId="EBI-2555731">
        <id>Q9H707</id>
        <label>ZNF552</label>
    </interactant>
    <organismsDiffer>false</organismsDiffer>
    <experiments>6</experiments>
</comment>
<comment type="interaction">
    <interactant intactId="EBI-10302392">
        <id>Q9BYQ6</id>
    </interactant>
    <interactant intactId="EBI-11962574">
        <id>Q96EG3</id>
        <label>ZNF837</label>
    </interactant>
    <organismsDiffer>false</organismsDiffer>
    <experiments>3</experiments>
</comment>
<comment type="tissue specificity">
    <text evidence="1">Expressed in the hair follicles.</text>
</comment>
<comment type="polymorphism">
    <text evidence="1">Numerous size polymorphism are present in KRTAP4 gene family, which are mainly due to variations in the sequence encoding cysteine-rich repeat segments (PubMed:15955084).</text>
</comment>
<comment type="similarity">
    <text evidence="2">Belongs to the KRTAP type 4 family.</text>
</comment>
<accession>Q9BYQ6</accession>
<accession>A0AUY2</accession>
<name>KR411_HUMAN</name>
<keyword id="KW-0416">Keratin</keyword>
<keyword id="KW-1267">Proteomics identification</keyword>
<keyword id="KW-1185">Reference proteome</keyword>
<keyword id="KW-0677">Repeat</keyword>
<feature type="chain" id="PRO_0000185180" description="Keratin-associated protein 4-11">
    <location>
        <begin position="1"/>
        <end position="195"/>
    </location>
</feature>
<feature type="repeat" description="1">
    <location>
        <begin position="5"/>
        <end position="9"/>
    </location>
</feature>
<feature type="repeat" description="2">
    <location>
        <begin position="24"/>
        <end position="28"/>
    </location>
</feature>
<feature type="repeat" description="3">
    <location>
        <begin position="29"/>
        <end position="33"/>
    </location>
</feature>
<feature type="repeat" description="4">
    <location>
        <begin position="34"/>
        <end position="38"/>
    </location>
</feature>
<feature type="repeat" description="5">
    <location>
        <begin position="44"/>
        <end position="48"/>
    </location>
</feature>
<feature type="repeat" description="6">
    <location>
        <begin position="49"/>
        <end position="53"/>
    </location>
</feature>
<feature type="repeat" description="7">
    <location>
        <begin position="54"/>
        <end position="58"/>
    </location>
</feature>
<feature type="repeat" description="8">
    <location>
        <begin position="59"/>
        <end position="63"/>
    </location>
</feature>
<feature type="repeat" description="9">
    <location>
        <begin position="64"/>
        <end position="68"/>
    </location>
</feature>
<feature type="repeat" description="10">
    <location>
        <begin position="69"/>
        <end position="73"/>
    </location>
</feature>
<feature type="repeat" description="11">
    <location>
        <begin position="74"/>
        <end position="78"/>
    </location>
</feature>
<feature type="repeat" description="12">
    <location>
        <begin position="79"/>
        <end position="83"/>
    </location>
</feature>
<feature type="repeat" description="13">
    <location>
        <begin position="84"/>
        <end position="88"/>
    </location>
</feature>
<feature type="repeat" description="14">
    <location>
        <begin position="89"/>
        <end position="93"/>
    </location>
</feature>
<feature type="repeat" description="15">
    <location>
        <begin position="94"/>
        <end position="98"/>
    </location>
</feature>
<feature type="repeat" description="16">
    <location>
        <begin position="99"/>
        <end position="103"/>
    </location>
</feature>
<feature type="repeat" description="17">
    <location>
        <begin position="104"/>
        <end position="108"/>
    </location>
</feature>
<feature type="repeat" description="18">
    <location>
        <begin position="109"/>
        <end position="113"/>
    </location>
</feature>
<feature type="repeat" description="19">
    <location>
        <begin position="114"/>
        <end position="118"/>
    </location>
</feature>
<feature type="repeat" description="20">
    <location>
        <begin position="119"/>
        <end position="123"/>
    </location>
</feature>
<feature type="repeat" description="21">
    <location>
        <begin position="124"/>
        <end position="128"/>
    </location>
</feature>
<feature type="repeat" description="22">
    <location>
        <begin position="129"/>
        <end position="133"/>
    </location>
</feature>
<feature type="repeat" description="23">
    <location>
        <begin position="134"/>
        <end position="138"/>
    </location>
</feature>
<feature type="repeat" description="24">
    <location>
        <begin position="144"/>
        <end position="148"/>
    </location>
</feature>
<feature type="repeat" description="25">
    <location>
        <begin position="149"/>
        <end position="153"/>
    </location>
</feature>
<feature type="repeat" description="26">
    <location>
        <begin position="154"/>
        <end position="158"/>
    </location>
</feature>
<feature type="repeat" description="27">
    <location>
        <begin position="159"/>
        <end position="163"/>
    </location>
</feature>
<feature type="region of interest" description="27 X 5 AA repeats of C-C-[GIKRQVHEL]-[SPTR]-[STVQRMC]">
    <location>
        <begin position="5"/>
        <end position="163"/>
    </location>
</feature>
<feature type="sequence variant" id="VAR_064553" description="In allele KAP4.14." evidence="1">
    <location>
        <begin position="44"/>
        <end position="78"/>
    </location>
</feature>
<feature type="sequence conflict" description="In Ref. 1; CAC27583 and 3; AAI26132/AAI30563." evidence="2" ref="1 3">
    <original>R</original>
    <variation>Q</variation>
    <location>
        <position position="17"/>
    </location>
</feature>
<feature type="sequence conflict" description="In Ref. 1; CAC27583 and 3; AAI26132/AAI30563." evidence="2" ref="1 3">
    <original>R</original>
    <variation>G</variation>
    <location>
        <position position="167"/>
    </location>
</feature>
<reference key="1">
    <citation type="journal article" date="2001" name="J. Biol. Chem.">
        <title>Characterization of a cluster of human high/ultrahigh sulfur keratin-associated protein genes embedded in the type I keratin gene domain on chromosome 17q12-21.</title>
        <authorList>
            <person name="Rogers M.A."/>
            <person name="Langbein L."/>
            <person name="Winter H."/>
            <person name="Ehmann C."/>
            <person name="Praetzel S."/>
            <person name="Korn B."/>
            <person name="Schweizer J."/>
        </authorList>
    </citation>
    <scope>NUCLEOTIDE SEQUENCE [MRNA]</scope>
    <source>
        <tissue>Scalp</tissue>
    </source>
</reference>
<reference key="2">
    <citation type="journal article" date="2006" name="Nature">
        <title>DNA sequence of human chromosome 17 and analysis of rearrangement in the human lineage.</title>
        <authorList>
            <person name="Zody M.C."/>
            <person name="Garber M."/>
            <person name="Adams D.J."/>
            <person name="Sharpe T."/>
            <person name="Harrow J."/>
            <person name="Lupski J.R."/>
            <person name="Nicholson C."/>
            <person name="Searle S.M."/>
            <person name="Wilming L."/>
            <person name="Young S.K."/>
            <person name="Abouelleil A."/>
            <person name="Allen N.R."/>
            <person name="Bi W."/>
            <person name="Bloom T."/>
            <person name="Borowsky M.L."/>
            <person name="Bugalter B.E."/>
            <person name="Butler J."/>
            <person name="Chang J.L."/>
            <person name="Chen C.-K."/>
            <person name="Cook A."/>
            <person name="Corum B."/>
            <person name="Cuomo C.A."/>
            <person name="de Jong P.J."/>
            <person name="DeCaprio D."/>
            <person name="Dewar K."/>
            <person name="FitzGerald M."/>
            <person name="Gilbert J."/>
            <person name="Gibson R."/>
            <person name="Gnerre S."/>
            <person name="Goldstein S."/>
            <person name="Grafham D.V."/>
            <person name="Grocock R."/>
            <person name="Hafez N."/>
            <person name="Hagopian D.S."/>
            <person name="Hart E."/>
            <person name="Norman C.H."/>
            <person name="Humphray S."/>
            <person name="Jaffe D.B."/>
            <person name="Jones M."/>
            <person name="Kamal M."/>
            <person name="Khodiyar V.K."/>
            <person name="LaButti K."/>
            <person name="Laird G."/>
            <person name="Lehoczky J."/>
            <person name="Liu X."/>
            <person name="Lokyitsang T."/>
            <person name="Loveland J."/>
            <person name="Lui A."/>
            <person name="Macdonald P."/>
            <person name="Major J.E."/>
            <person name="Matthews L."/>
            <person name="Mauceli E."/>
            <person name="McCarroll S.A."/>
            <person name="Mihalev A.H."/>
            <person name="Mudge J."/>
            <person name="Nguyen C."/>
            <person name="Nicol R."/>
            <person name="O'Leary S.B."/>
            <person name="Osoegawa K."/>
            <person name="Schwartz D.C."/>
            <person name="Shaw-Smith C."/>
            <person name="Stankiewicz P."/>
            <person name="Steward C."/>
            <person name="Swarbreck D."/>
            <person name="Venkataraman V."/>
            <person name="Whittaker C.A."/>
            <person name="Yang X."/>
            <person name="Zimmer A.R."/>
            <person name="Bradley A."/>
            <person name="Hubbard T."/>
            <person name="Birren B.W."/>
            <person name="Rogers J."/>
            <person name="Lander E.S."/>
            <person name="Nusbaum C."/>
        </authorList>
    </citation>
    <scope>NUCLEOTIDE SEQUENCE [LARGE SCALE GENOMIC DNA]</scope>
</reference>
<reference key="3">
    <citation type="journal article" date="2004" name="Genome Res.">
        <title>The status, quality, and expansion of the NIH full-length cDNA project: the Mammalian Gene Collection (MGC).</title>
        <authorList>
            <consortium name="The MGC Project Team"/>
        </authorList>
    </citation>
    <scope>NUCLEOTIDE SEQUENCE [LARGE SCALE MRNA]</scope>
</reference>
<reference key="4">
    <citation type="journal article" date="2005" name="J. Invest. Dermatol.">
        <title>Size polymorphisms in the human ultrahigh sulfur hair keratin-associated protein 4, KAP4, gene family.</title>
        <authorList>
            <person name="Kariya N."/>
            <person name="Shimomura Y."/>
            <person name="Ito M."/>
        </authorList>
    </citation>
    <scope>TISSUE SPECIFICITY</scope>
    <scope>POLYMORPHISM</scope>
    <scope>VARIANT 44-CYS--SER-78 DEL</scope>
</reference>
<sequence>MVNSCCGSVCSHQGCGRDLCQETCCRPSCCETTCCRTTYCRPSCCVSSCCRPQCCQSVCCQPTCCRPRCCISSCCRPSCCVSSCCKPQCCQSMCCQPTCCRPRCCISSCCRPSCCVSSCCRPQCCQSVCCQPTCCHPSCSISSCCRPSCCESSCCRPCCCLRPVCGRVSCHTTCYRPTCVISSCPRPLCCASSCC</sequence>
<organism>
    <name type="scientific">Homo sapiens</name>
    <name type="common">Human</name>
    <dbReference type="NCBI Taxonomy" id="9606"/>
    <lineage>
        <taxon>Eukaryota</taxon>
        <taxon>Metazoa</taxon>
        <taxon>Chordata</taxon>
        <taxon>Craniata</taxon>
        <taxon>Vertebrata</taxon>
        <taxon>Euteleostomi</taxon>
        <taxon>Mammalia</taxon>
        <taxon>Eutheria</taxon>
        <taxon>Euarchontoglires</taxon>
        <taxon>Primates</taxon>
        <taxon>Haplorrhini</taxon>
        <taxon>Catarrhini</taxon>
        <taxon>Hominidae</taxon>
        <taxon>Homo</taxon>
    </lineage>
</organism>
<dbReference type="EMBL" id="AJ406944">
    <property type="protein sequence ID" value="CAC27583.1"/>
    <property type="molecule type" value="mRNA"/>
</dbReference>
<dbReference type="EMBL" id="AC100808">
    <property type="status" value="NOT_ANNOTATED_CDS"/>
    <property type="molecule type" value="Genomic_DNA"/>
</dbReference>
<dbReference type="EMBL" id="BC126131">
    <property type="protein sequence ID" value="AAI26132.1"/>
    <property type="molecule type" value="mRNA"/>
</dbReference>
<dbReference type="EMBL" id="BC130562">
    <property type="protein sequence ID" value="AAI30563.1"/>
    <property type="molecule type" value="mRNA"/>
</dbReference>
<dbReference type="CCDS" id="CCDS45675.1"/>
<dbReference type="RefSeq" id="NP_149048.2">
    <property type="nucleotide sequence ID" value="NM_033059.4"/>
</dbReference>
<dbReference type="BioGRID" id="575632">
    <property type="interactions" value="92"/>
</dbReference>
<dbReference type="FunCoup" id="Q9BYQ6">
    <property type="interactions" value="54"/>
</dbReference>
<dbReference type="IntAct" id="Q9BYQ6">
    <property type="interactions" value="71"/>
</dbReference>
<dbReference type="MINT" id="Q9BYQ6"/>
<dbReference type="BioMuta" id="KRTAP4-11"/>
<dbReference type="DMDM" id="296434556"/>
<dbReference type="MassIVE" id="Q9BYQ6"/>
<dbReference type="PeptideAtlas" id="Q9BYQ6"/>
<dbReference type="DNASU" id="653240"/>
<dbReference type="Ensembl" id="ENST00000391413.4">
    <property type="protein sequence ID" value="ENSP00000375232.2"/>
    <property type="gene ID" value="ENSG00000212721.4"/>
</dbReference>
<dbReference type="Ensembl" id="ENST00000573418.2">
    <property type="protein sequence ID" value="ENSP00000460506.1"/>
    <property type="gene ID" value="ENSG00000263229.4"/>
</dbReference>
<dbReference type="Ensembl" id="ENST00000709602.1">
    <property type="protein sequence ID" value="ENSP00000517789.1"/>
    <property type="gene ID" value="ENSG00000292038.1"/>
</dbReference>
<dbReference type="GeneID" id="653240"/>
<dbReference type="KEGG" id="hsa:653240"/>
<dbReference type="MANE-Select" id="ENST00000391413.4">
    <property type="protein sequence ID" value="ENSP00000375232.2"/>
    <property type="RefSeq nucleotide sequence ID" value="NM_033059.4"/>
    <property type="RefSeq protein sequence ID" value="NP_149048.2"/>
</dbReference>
<dbReference type="UCSC" id="uc002hvz.5">
    <property type="organism name" value="human"/>
</dbReference>
<dbReference type="AGR" id="HGNC:18911"/>
<dbReference type="CTD" id="653240"/>
<dbReference type="GeneCards" id="KRTAP4-11"/>
<dbReference type="HGNC" id="HGNC:18911">
    <property type="gene designation" value="KRTAP4-11"/>
</dbReference>
<dbReference type="HPA" id="ENSG00000212721">
    <property type="expression patterns" value="Tissue enriched (skin)"/>
</dbReference>
<dbReference type="neXtProt" id="NX_Q9BYQ6"/>
<dbReference type="PharmGKB" id="PA38759"/>
<dbReference type="VEuPathDB" id="HostDB:ENSG00000212721"/>
<dbReference type="eggNOG" id="KOG4726">
    <property type="taxonomic scope" value="Eukaryota"/>
</dbReference>
<dbReference type="GeneTree" id="ENSGT00940000163975"/>
<dbReference type="HOGENOM" id="CLU_113141_2_0_1"/>
<dbReference type="InParanoid" id="Q9BYQ6"/>
<dbReference type="OMA" id="CCVRGSC"/>
<dbReference type="PAN-GO" id="Q9BYQ6">
    <property type="GO annotations" value="0 GO annotations based on evolutionary models"/>
</dbReference>
<dbReference type="TreeFam" id="TF351356"/>
<dbReference type="PathwayCommons" id="Q9BYQ6"/>
<dbReference type="Reactome" id="R-HSA-6805567">
    <property type="pathway name" value="Keratinization"/>
</dbReference>
<dbReference type="SignaLink" id="Q9BYQ6"/>
<dbReference type="BioGRID-ORCS" id="653240">
    <property type="hits" value="334 hits in 1039 CRISPR screens"/>
</dbReference>
<dbReference type="GenomeRNAi" id="653240"/>
<dbReference type="Pharos" id="Q9BYQ6">
    <property type="development level" value="Tdark"/>
</dbReference>
<dbReference type="PRO" id="PR:Q9BYQ6"/>
<dbReference type="Proteomes" id="UP000005640">
    <property type="component" value="Chromosome 17"/>
</dbReference>
<dbReference type="RNAct" id="Q9BYQ6">
    <property type="molecule type" value="protein"/>
</dbReference>
<dbReference type="Bgee" id="ENSG00000212721">
    <property type="expression patterns" value="Expressed in skin of abdomen and 8 other cell types or tissues"/>
</dbReference>
<dbReference type="GO" id="GO:0005829">
    <property type="term" value="C:cytosol"/>
    <property type="evidence" value="ECO:0000304"/>
    <property type="project" value="Reactome"/>
</dbReference>
<dbReference type="GO" id="GO:0045095">
    <property type="term" value="C:keratin filament"/>
    <property type="evidence" value="ECO:0007669"/>
    <property type="project" value="InterPro"/>
</dbReference>
<dbReference type="InterPro" id="IPR002494">
    <property type="entry name" value="KAP"/>
</dbReference>
<dbReference type="PANTHER" id="PTHR23262">
    <property type="entry name" value="KERATIN ASSOCIATED PROTEIN"/>
    <property type="match status" value="1"/>
</dbReference>
<dbReference type="PANTHER" id="PTHR23262:SF183">
    <property type="entry name" value="KERATIN-ASSOCIATED PROTEIN 4-11-RELATED"/>
    <property type="match status" value="1"/>
</dbReference>
<dbReference type="Pfam" id="PF13885">
    <property type="entry name" value="Keratin_B2_2"/>
    <property type="match status" value="2"/>
</dbReference>
<gene>
    <name type="primary">KRTAP4-11</name>
    <name type="synonym">KAP4.14</name>
    <name type="synonym">KRTAP4-14</name>
    <name type="synonym">KRTAP4.11</name>
    <name type="synonym">KRTAP4.14</name>
</gene>
<evidence type="ECO:0000269" key="1">
    <source>
    </source>
</evidence>
<evidence type="ECO:0000305" key="2"/>
<proteinExistence type="evidence at protein level"/>